<evidence type="ECO:0000250" key="1">
    <source>
        <dbReference type="UniProtKB" id="O00591"/>
    </source>
</evidence>
<evidence type="ECO:0000250" key="2">
    <source>
        <dbReference type="UniProtKB" id="P18507"/>
    </source>
</evidence>
<evidence type="ECO:0000250" key="3">
    <source>
        <dbReference type="UniProtKB" id="P28472"/>
    </source>
</evidence>
<evidence type="ECO:0000250" key="4">
    <source>
        <dbReference type="UniProtKB" id="P47870"/>
    </source>
</evidence>
<evidence type="ECO:0000255" key="5"/>
<evidence type="ECO:0000269" key="6">
    <source>
    </source>
</evidence>
<evidence type="ECO:0000303" key="7">
    <source>
    </source>
</evidence>
<evidence type="ECO:0000303" key="8">
    <source>
    </source>
</evidence>
<evidence type="ECO:0000305" key="9"/>
<evidence type="ECO:0000312" key="10">
    <source>
        <dbReference type="RGD" id="620532"/>
    </source>
</evidence>
<organism>
    <name type="scientific">Rattus norvegicus</name>
    <name type="common">Rat</name>
    <dbReference type="NCBI Taxonomy" id="10116"/>
    <lineage>
        <taxon>Eukaryota</taxon>
        <taxon>Metazoa</taxon>
        <taxon>Chordata</taxon>
        <taxon>Craniata</taxon>
        <taxon>Vertebrata</taxon>
        <taxon>Euteleostomi</taxon>
        <taxon>Mammalia</taxon>
        <taxon>Eutheria</taxon>
        <taxon>Euarchontoglires</taxon>
        <taxon>Glires</taxon>
        <taxon>Rodentia</taxon>
        <taxon>Myomorpha</taxon>
        <taxon>Muroidea</taxon>
        <taxon>Muridae</taxon>
        <taxon>Murinae</taxon>
        <taxon>Rattus</taxon>
    </lineage>
</organism>
<comment type="function">
    <text evidence="1 4 6">Pi subunit of the heteropentameric ligand-gated chloride channel gated by gamma-aminobutyric acid (GABA) (PubMed:17003036). GABA-gated chloride channels, also named GABA(A) receptors (GABAAR), consist of five subunits arranged around a central pore and contain GABA active binding site(s) located at the alpha and beta subunit interfaces (By similarity). When activated by GABA, GABAARs selectively allow the flow of chloride anions across the cell membrane down their electrochemical gradient (PubMed:17003036). Pi-containing GABAARs are mostly located in peripheral tissues (PubMed:17003036). In the uterus, pi subunits modulate uterus contraction by altering the sensitivity of GABAARs to pregnanolone (By similarity). In the lungs, pi-containing GABAARs contribute to pulmonary fluid transport via luminal secretion of chloride (PubMed:17003036).</text>
</comment>
<comment type="catalytic activity">
    <reaction evidence="6">
        <text>chloride(in) = chloride(out)</text>
        <dbReference type="Rhea" id="RHEA:29823"/>
        <dbReference type="ChEBI" id="CHEBI:17996"/>
    </reaction>
</comment>
<comment type="subunit">
    <text evidence="1">Heteropentamer, formed by a combination of alpha (GABRA1-6), beta (GABRB1-3), gamma (GABRG1-3), delta (GABRD), epsilon (GABRE), rho (GABRR1-3), pi (GABRP) and theta (GABRQ) chains, each subunit exhibiting distinct physiological and pharmacological properties.</text>
</comment>
<comment type="subcellular location">
    <subcellularLocation>
        <location>Cell membrane</location>
        <topology evidence="5">Multi-pass membrane protein</topology>
    </subcellularLocation>
    <subcellularLocation>
        <location evidence="6">Apical cell membrane</location>
        <topology evidence="5">Multi-pass membrane protein</topology>
    </subcellularLocation>
    <text evidence="6">Located on the apical plasma membrane of alveolar epithelial type II cells.</text>
</comment>
<comment type="tissue specificity">
    <text evidence="6">Expressed in lungs, in alveolar epithelium.</text>
</comment>
<comment type="domain">
    <text evidence="2">GABAARs subunits share a common topological structure: a peptide sequence made up of a long extracellular N-terminal, four transmembrane domains, intracellular or cytoplasmic domain located between the third and the fourth transmembrane domains.</text>
</comment>
<comment type="similarity">
    <text evidence="9">Belongs to the ligand-gated ion channel (TC 1.A.9) family. Gamma-aminobutyric acid receptor (TC 1.A.9.5) subfamily. GABRP sub-subfamily.</text>
</comment>
<reference key="1">
    <citation type="journal article" date="1997" name="J. Biol. Chem.">
        <title>A novel class of GABAA receptor subunit in tissues of the reproductive system.</title>
        <authorList>
            <person name="Hedblom E."/>
            <person name="Kirkness E.F."/>
        </authorList>
    </citation>
    <scope>NUCLEOTIDE SEQUENCE [MRNA]</scope>
</reference>
<reference key="2">
    <citation type="journal article" date="2006" name="J. Biol. Chem.">
        <title>A novel function of ionotropic gamma-aminobutyric acid receptors involving alveolar fluid homeostasis.</title>
        <authorList>
            <person name="Jin N."/>
            <person name="Kolliputi N."/>
            <person name="Gou D."/>
            <person name="Weng T."/>
            <person name="Liu L."/>
        </authorList>
    </citation>
    <scope>FUNCTION</scope>
    <scope>TRANSPORTER ACTIVITY</scope>
    <scope>SUBCELLULAR LOCATION</scope>
    <scope>TISSUE SPECIFICITY</scope>
</reference>
<gene>
    <name evidence="10" type="primary">Gabrp</name>
</gene>
<proteinExistence type="evidence at transcript level"/>
<keyword id="KW-1003">Cell membrane</keyword>
<keyword id="KW-0868">Chloride</keyword>
<keyword id="KW-0869">Chloride channel</keyword>
<keyword id="KW-1015">Disulfide bond</keyword>
<keyword id="KW-0325">Glycoprotein</keyword>
<keyword id="KW-0407">Ion channel</keyword>
<keyword id="KW-0406">Ion transport</keyword>
<keyword id="KW-0472">Membrane</keyword>
<keyword id="KW-1185">Reference proteome</keyword>
<keyword id="KW-0732">Signal</keyword>
<keyword id="KW-0812">Transmembrane</keyword>
<keyword id="KW-1133">Transmembrane helix</keyword>
<keyword id="KW-0813">Transport</keyword>
<feature type="signal peptide" evidence="5">
    <location>
        <begin position="1"/>
        <end position="23"/>
    </location>
</feature>
<feature type="chain" id="PRO_0000000494" description="Gamma-aminobutyric acid receptor subunit pi" evidence="5">
    <location>
        <begin position="24"/>
        <end position="440"/>
    </location>
</feature>
<feature type="topological domain" description="Extracellular" evidence="9">
    <location>
        <begin position="24"/>
        <end position="241"/>
    </location>
</feature>
<feature type="transmembrane region" description="Helical" evidence="5">
    <location>
        <begin position="242"/>
        <end position="262"/>
    </location>
</feature>
<feature type="topological domain" description="Cytoplasmic" evidence="9">
    <location>
        <begin position="263"/>
        <end position="270"/>
    </location>
</feature>
<feature type="transmembrane region" description="Helical" evidence="5">
    <location>
        <begin position="271"/>
        <end position="290"/>
    </location>
</feature>
<feature type="topological domain" description="Extracellular" evidence="9">
    <location>
        <begin position="291"/>
        <end position="301"/>
    </location>
</feature>
<feature type="transmembrane region" description="Helical" evidence="5">
    <location>
        <begin position="302"/>
        <end position="322"/>
    </location>
</feature>
<feature type="topological domain" description="Cytoplasmic" evidence="9">
    <location>
        <begin position="323"/>
        <end position="419"/>
    </location>
</feature>
<feature type="transmembrane region" description="Helical" evidence="5">
    <location>
        <begin position="420"/>
        <end position="440"/>
    </location>
</feature>
<feature type="glycosylation site" description="N-linked (GlcNAc...) asparagine" evidence="5">
    <location>
        <position position="43"/>
    </location>
</feature>
<feature type="glycosylation site" description="N-linked (GlcNAc...) asparagine" evidence="5">
    <location>
        <position position="102"/>
    </location>
</feature>
<feature type="glycosylation site" description="N-linked (GlcNAc...) asparagine" evidence="5">
    <location>
        <position position="145"/>
    </location>
</feature>
<feature type="glycosylation site" description="N-linked (GlcNAc...) asparagine" evidence="5">
    <location>
        <position position="196"/>
    </location>
</feature>
<feature type="glycosylation site" description="N-linked (GlcNAc...) asparagine" evidence="5">
    <location>
        <position position="228"/>
    </location>
</feature>
<feature type="disulfide bond" evidence="3">
    <location>
        <begin position="160"/>
        <end position="174"/>
    </location>
</feature>
<dbReference type="EMBL" id="U95368">
    <property type="protein sequence ID" value="AAC53255.1"/>
    <property type="molecule type" value="mRNA"/>
</dbReference>
<dbReference type="RefSeq" id="NP_112291.1">
    <property type="nucleotide sequence ID" value="NM_031029.2"/>
</dbReference>
<dbReference type="SMR" id="O09028"/>
<dbReference type="FunCoup" id="O09028">
    <property type="interactions" value="31"/>
</dbReference>
<dbReference type="STRING" id="10116.ENSRNOP00000048081"/>
<dbReference type="ChEMBL" id="CHEMBL1907607"/>
<dbReference type="DrugCentral" id="O09028"/>
<dbReference type="GlyCosmos" id="O09028">
    <property type="glycosylation" value="5 sites, No reported glycans"/>
</dbReference>
<dbReference type="GlyGen" id="O09028">
    <property type="glycosylation" value="5 sites"/>
</dbReference>
<dbReference type="PhosphoSitePlus" id="O09028"/>
<dbReference type="PaxDb" id="10116-ENSRNOP00000048081"/>
<dbReference type="Ensembl" id="ENSRNOT00000043036.6">
    <property type="protein sequence ID" value="ENSRNOP00000048081.6"/>
    <property type="gene ID" value="ENSRNOG00000032417.6"/>
</dbReference>
<dbReference type="GeneID" id="81658"/>
<dbReference type="KEGG" id="rno:81658"/>
<dbReference type="UCSC" id="RGD:620532">
    <property type="organism name" value="rat"/>
</dbReference>
<dbReference type="AGR" id="RGD:620532"/>
<dbReference type="CTD" id="2568"/>
<dbReference type="RGD" id="620532">
    <property type="gene designation" value="Gabrp"/>
</dbReference>
<dbReference type="eggNOG" id="KOG3643">
    <property type="taxonomic scope" value="Eukaryota"/>
</dbReference>
<dbReference type="GeneTree" id="ENSGT00940000160813"/>
<dbReference type="InParanoid" id="O09028"/>
<dbReference type="OMA" id="TTVTCNM"/>
<dbReference type="OrthoDB" id="8890589at2759"/>
<dbReference type="PhylomeDB" id="O09028"/>
<dbReference type="PRO" id="PR:O09028"/>
<dbReference type="Proteomes" id="UP000002494">
    <property type="component" value="Chromosome 10"/>
</dbReference>
<dbReference type="GO" id="GO:0016324">
    <property type="term" value="C:apical plasma membrane"/>
    <property type="evidence" value="ECO:0007669"/>
    <property type="project" value="UniProtKB-SubCell"/>
</dbReference>
<dbReference type="GO" id="GO:0034707">
    <property type="term" value="C:chloride channel complex"/>
    <property type="evidence" value="ECO:0007669"/>
    <property type="project" value="UniProtKB-KW"/>
</dbReference>
<dbReference type="GO" id="GO:1902711">
    <property type="term" value="C:GABA-A receptor complex"/>
    <property type="evidence" value="ECO:0000318"/>
    <property type="project" value="GO_Central"/>
</dbReference>
<dbReference type="GO" id="GO:0005886">
    <property type="term" value="C:plasma membrane"/>
    <property type="evidence" value="ECO:0000314"/>
    <property type="project" value="UniProtKB"/>
</dbReference>
<dbReference type="GO" id="GO:0004890">
    <property type="term" value="F:GABA-A receptor activity"/>
    <property type="evidence" value="ECO:0000315"/>
    <property type="project" value="UniProtKB"/>
</dbReference>
<dbReference type="GO" id="GO:0022851">
    <property type="term" value="F:GABA-gated chloride ion channel activity"/>
    <property type="evidence" value="ECO:0000315"/>
    <property type="project" value="UniProtKB"/>
</dbReference>
<dbReference type="GO" id="GO:1902476">
    <property type="term" value="P:chloride transmembrane transport"/>
    <property type="evidence" value="ECO:0000318"/>
    <property type="project" value="GO_Central"/>
</dbReference>
<dbReference type="CDD" id="cd19058">
    <property type="entry name" value="LGIC_TM_GABAAR_pi"/>
    <property type="match status" value="1"/>
</dbReference>
<dbReference type="FunFam" id="2.70.170.10:FF:000011">
    <property type="entry name" value="Gamma-aminobutyric acid receptor subunit pi isoform X1"/>
    <property type="match status" value="1"/>
</dbReference>
<dbReference type="Gene3D" id="2.70.170.10">
    <property type="entry name" value="Neurotransmitter-gated ion-channel ligand-binding domain"/>
    <property type="match status" value="1"/>
</dbReference>
<dbReference type="Gene3D" id="1.20.58.390">
    <property type="entry name" value="Neurotransmitter-gated ion-channel transmembrane domain"/>
    <property type="match status" value="1"/>
</dbReference>
<dbReference type="InterPro" id="IPR006028">
    <property type="entry name" value="GABAA/Glycine_rcpt"/>
</dbReference>
<dbReference type="InterPro" id="IPR008100">
    <property type="entry name" value="GABAAp_rcpt"/>
</dbReference>
<dbReference type="InterPro" id="IPR047032">
    <property type="entry name" value="GABAAR_pi_TM"/>
</dbReference>
<dbReference type="InterPro" id="IPR006202">
    <property type="entry name" value="Neur_chan_lig-bd"/>
</dbReference>
<dbReference type="InterPro" id="IPR036734">
    <property type="entry name" value="Neur_chan_lig-bd_sf"/>
</dbReference>
<dbReference type="InterPro" id="IPR006201">
    <property type="entry name" value="Neur_channel"/>
</dbReference>
<dbReference type="InterPro" id="IPR036719">
    <property type="entry name" value="Neuro-gated_channel_TM_sf"/>
</dbReference>
<dbReference type="InterPro" id="IPR038050">
    <property type="entry name" value="Neuro_actylchol_rec"/>
</dbReference>
<dbReference type="InterPro" id="IPR006029">
    <property type="entry name" value="Neurotrans-gated_channel_TM"/>
</dbReference>
<dbReference type="InterPro" id="IPR018000">
    <property type="entry name" value="Neurotransmitter_ion_chnl_CS"/>
</dbReference>
<dbReference type="NCBIfam" id="TIGR00860">
    <property type="entry name" value="LIC"/>
    <property type="match status" value="1"/>
</dbReference>
<dbReference type="PANTHER" id="PTHR18945">
    <property type="entry name" value="NEUROTRANSMITTER GATED ION CHANNEL"/>
    <property type="match status" value="1"/>
</dbReference>
<dbReference type="Pfam" id="PF02931">
    <property type="entry name" value="Neur_chan_LBD"/>
    <property type="match status" value="1"/>
</dbReference>
<dbReference type="Pfam" id="PF02932">
    <property type="entry name" value="Neur_chan_memb"/>
    <property type="match status" value="1"/>
</dbReference>
<dbReference type="PRINTS" id="PR00253">
    <property type="entry name" value="GABAARECEPTR"/>
</dbReference>
<dbReference type="PRINTS" id="PR01724">
    <property type="entry name" value="GABAARPI"/>
</dbReference>
<dbReference type="PRINTS" id="PR00252">
    <property type="entry name" value="NRIONCHANNEL"/>
</dbReference>
<dbReference type="SUPFAM" id="SSF90112">
    <property type="entry name" value="Neurotransmitter-gated ion-channel transmembrane pore"/>
    <property type="match status" value="1"/>
</dbReference>
<dbReference type="SUPFAM" id="SSF63712">
    <property type="entry name" value="Nicotinic receptor ligand binding domain-like"/>
    <property type="match status" value="1"/>
</dbReference>
<dbReference type="PROSITE" id="PS00236">
    <property type="entry name" value="NEUROTR_ION_CHANNEL"/>
    <property type="match status" value="1"/>
</dbReference>
<protein>
    <recommendedName>
        <fullName evidence="7">Gamma-aminobutyric acid receptor subunit pi</fullName>
    </recommendedName>
    <alternativeName>
        <fullName evidence="8">GABA(A) receptor subunit pi</fullName>
        <shortName>GABAAR subunit pi</shortName>
    </alternativeName>
</protein>
<sequence>MSYSLYLAFVCLNLLAQRMCIQGNQFNVEVSRSDKLSLPGFENLTAGYNKFLRPNFGGDPVRIALTLDIASISSISESNMDYTATIYLRQRWTDPRLVFEGNKSFTLDARLVEFLWVPDTYIVESKKSFLHEVTVGNRLIRLFSNGTVLYALRITTTVTCNMDLSKYPMDTQTCKLQLESWGYDGNDVEFSWLRGNDSVRGLENLRLAQYTIQQYFTLVTVSQQETGNYTRLVLQFELRRNVLYFILETYVPSTFLVVLSWVSFWISLESVPARTCIGVTTVLSMTTLMIGSRTSLPNTNCFIKAIDVYLGICFSFVFGALLEYAVAHYSSLQQMAVKDRGPAKDSEEVNITNIINSSISSFKRKISFASIEISGDNVNYSDLTMKASDKFKFVFREKIGRIIDYFTIQNPSNVDRYSKLLFPLIFMLANVFYWAYYMYF</sequence>
<accession>O09028</accession>
<name>GBRP_RAT</name>